<dbReference type="EMBL" id="KB445638">
    <property type="protein sequence ID" value="EMD67942.1"/>
    <property type="status" value="ALT_SEQ"/>
    <property type="molecule type" value="Genomic_DNA"/>
</dbReference>
<dbReference type="RefSeq" id="XP_007695649.1">
    <property type="nucleotide sequence ID" value="XM_007697459.1"/>
</dbReference>
<dbReference type="SMR" id="M2TGT8"/>
<dbReference type="GeneID" id="19140401"/>
<dbReference type="KEGG" id="bsc:COCSADRAFT_62627"/>
<dbReference type="eggNOG" id="ENOG502RYQD">
    <property type="taxonomic scope" value="Eukaryota"/>
</dbReference>
<dbReference type="HOGENOM" id="CLU_1286061_0_0_1"/>
<dbReference type="OrthoDB" id="5599552at2759"/>
<dbReference type="PHI-base" id="PHI:5104"/>
<dbReference type="Proteomes" id="UP000016934">
    <property type="component" value="Unassembled WGS sequence"/>
</dbReference>
<dbReference type="GO" id="GO:0005634">
    <property type="term" value="C:nucleus"/>
    <property type="evidence" value="ECO:0007669"/>
    <property type="project" value="UniProtKB-SubCell"/>
</dbReference>
<dbReference type="GO" id="GO:0030435">
    <property type="term" value="P:sporulation resulting in formation of a cellular spore"/>
    <property type="evidence" value="ECO:0007669"/>
    <property type="project" value="UniProtKB-KW"/>
</dbReference>
<dbReference type="Gene3D" id="2.60.40.3960">
    <property type="entry name" value="Velvet domain"/>
    <property type="match status" value="1"/>
</dbReference>
<dbReference type="InterPro" id="IPR021740">
    <property type="entry name" value="Velvet"/>
</dbReference>
<dbReference type="InterPro" id="IPR037525">
    <property type="entry name" value="Velvet_dom"/>
</dbReference>
<dbReference type="InterPro" id="IPR038491">
    <property type="entry name" value="Velvet_dom_sf"/>
</dbReference>
<dbReference type="PANTHER" id="PTHR33572">
    <property type="entry name" value="SPORE DEVELOPMENT REGULATOR VOSA"/>
    <property type="match status" value="1"/>
</dbReference>
<dbReference type="PANTHER" id="PTHR33572:SF18">
    <property type="entry name" value="SPORE DEVELOPMENT REGULATOR VOSA"/>
    <property type="match status" value="1"/>
</dbReference>
<dbReference type="Pfam" id="PF11754">
    <property type="entry name" value="Velvet"/>
    <property type="match status" value="2"/>
</dbReference>
<dbReference type="PROSITE" id="PS51821">
    <property type="entry name" value="VELVET"/>
    <property type="match status" value="1"/>
</dbReference>
<name>VOSA_COCSN</name>
<organism>
    <name type="scientific">Cochliobolus sativus (strain ND90Pr / ATCC 201652)</name>
    <name type="common">Common root rot and spot blotch fungus</name>
    <name type="synonym">Bipolaris sorokiniana</name>
    <dbReference type="NCBI Taxonomy" id="665912"/>
    <lineage>
        <taxon>Eukaryota</taxon>
        <taxon>Fungi</taxon>
        <taxon>Dikarya</taxon>
        <taxon>Ascomycota</taxon>
        <taxon>Pezizomycotina</taxon>
        <taxon>Dothideomycetes</taxon>
        <taxon>Pleosporomycetidae</taxon>
        <taxon>Pleosporales</taxon>
        <taxon>Pleosporineae</taxon>
        <taxon>Pleosporaceae</taxon>
        <taxon>Bipolaris</taxon>
    </lineage>
</organism>
<feature type="chain" id="PRO_0000435788" description="Spore development regulator vosA">
    <location>
        <begin position="1"/>
        <end position="348"/>
    </location>
</feature>
<feature type="domain" description="Velvet" evidence="2">
    <location>
        <begin position="46"/>
        <end position="244"/>
    </location>
</feature>
<feature type="region of interest" description="Disordered" evidence="3">
    <location>
        <begin position="250"/>
        <end position="294"/>
    </location>
</feature>
<feature type="short sequence motif" description="Nuclear localization signal" evidence="7">
    <location>
        <begin position="274"/>
        <end position="280"/>
    </location>
</feature>
<feature type="compositionally biased region" description="Polar residues" evidence="3">
    <location>
        <begin position="253"/>
        <end position="266"/>
    </location>
</feature>
<accession>M2TGT8</accession>
<gene>
    <name evidence="5" type="primary">vosA</name>
    <name type="ORF">COCSADRAFT_62627</name>
</gene>
<proteinExistence type="evidence at transcript level"/>
<protein>
    <recommendedName>
        <fullName evidence="6">Spore development regulator vosA</fullName>
    </recommendedName>
</protein>
<keyword id="KW-0539">Nucleus</keyword>
<keyword id="KW-1185">Reference proteome</keyword>
<keyword id="KW-0749">Sporulation</keyword>
<keyword id="KW-0804">Transcription</keyword>
<keyword id="KW-0805">Transcription regulation</keyword>
<comment type="function">
    <text evidence="1 4">Component of the velB-VosA heterodimeric complex that plays a dual role in activating genes associated with spore maturation and repressing certain development-associated genes (By similarity). The complex binds DNA through the DNA-binding domain of vosA that recognizes an 11-nucleotide consensus sequence 5'-CTGGCCGCGGC-3' consisting of two motifs in the promoters of key developmental regulatory genes (By similarity). Regulates spore viability, trehalose accumulation, and tolerance to thermal and oxidative as well as ion stresses (PubMed:26399184). Positively regulates conidial pigmentation and pathogenicity on barley (PubMed:26399184).</text>
</comment>
<comment type="subunit">
    <text evidence="1">Forms a heterodimeric complex with VEL2; the formation of the VEL2-VOS1 complex is light-dependent (By similarity).</text>
</comment>
<comment type="subcellular location">
    <subcellularLocation>
        <location evidence="1">Nucleus</location>
    </subcellularLocation>
</comment>
<comment type="induction">
    <text evidence="4">Expression is up-regulated in conidia (PubMed:26399184).</text>
</comment>
<comment type="domain">
    <text evidence="1">The N-terminal velvet domain contains a NF-kappa-B-like fold and is involved in DNA-binding (By similarity).</text>
</comment>
<comment type="disruption phenotype">
    <text evidence="4">Reduces the amount of thehalose in conidia, tolerance to heat, oxidative and osmotic stress (PubMed:26399184).</text>
</comment>
<comment type="similarity">
    <text evidence="6">Belongs to the velvet family. VosA subfamily.</text>
</comment>
<comment type="sequence caution" evidence="6">
    <conflict type="erroneous gene model prediction">
        <sequence resource="EMBL-CDS" id="EMD67942"/>
    </conflict>
</comment>
<reference key="1">
    <citation type="journal article" date="2012" name="PLoS Pathog.">
        <title>Diverse lifestyles and strategies of plant pathogenesis encoded in the genomes of eighteen Dothideomycetes fungi.</title>
        <authorList>
            <person name="Ohm R.A."/>
            <person name="Feau N."/>
            <person name="Henrissat B."/>
            <person name="Schoch C.L."/>
            <person name="Horwitz B.A."/>
            <person name="Barry K.W."/>
            <person name="Condon B.J."/>
            <person name="Copeland A.C."/>
            <person name="Dhillon B."/>
            <person name="Glaser F."/>
            <person name="Hesse C.N."/>
            <person name="Kosti I."/>
            <person name="LaButti K."/>
            <person name="Lindquist E.A."/>
            <person name="Lucas S."/>
            <person name="Salamov A.A."/>
            <person name="Bradshaw R.E."/>
            <person name="Ciuffetti L."/>
            <person name="Hamelin R.C."/>
            <person name="Kema G.H.J."/>
            <person name="Lawrence C."/>
            <person name="Scott J.A."/>
            <person name="Spatafora J.W."/>
            <person name="Turgeon B.G."/>
            <person name="de Wit P.J.G.M."/>
            <person name="Zhong S."/>
            <person name="Goodwin S.B."/>
            <person name="Grigoriev I.V."/>
        </authorList>
    </citation>
    <scope>NUCLEOTIDE SEQUENCE [LARGE SCALE GENOMIC DNA]</scope>
    <source>
        <strain>ND90Pr / ATCC 201652</strain>
    </source>
</reference>
<reference key="2">
    <citation type="journal article" date="2013" name="PLoS Genet.">
        <title>Comparative genome structure, secondary metabolite, and effector coding capacity across Cochliobolus pathogens.</title>
        <authorList>
            <person name="Condon B.J."/>
            <person name="Leng Y."/>
            <person name="Wu D."/>
            <person name="Bushley K.E."/>
            <person name="Ohm R.A."/>
            <person name="Otillar R."/>
            <person name="Martin J."/>
            <person name="Schackwitz W."/>
            <person name="Grimwood J."/>
            <person name="MohdZainudin N."/>
            <person name="Xue C."/>
            <person name="Wang R."/>
            <person name="Manning V.A."/>
            <person name="Dhillon B."/>
            <person name="Tu Z.J."/>
            <person name="Steffenson B.J."/>
            <person name="Salamov A."/>
            <person name="Sun H."/>
            <person name="Lowry S."/>
            <person name="LaButti K."/>
            <person name="Han J."/>
            <person name="Copeland A."/>
            <person name="Lindquist E."/>
            <person name="Barry K."/>
            <person name="Schmutz J."/>
            <person name="Baker S.E."/>
            <person name="Ciuffetti L.M."/>
            <person name="Grigoriev I.V."/>
            <person name="Zhong S."/>
            <person name="Turgeon B.G."/>
        </authorList>
    </citation>
    <scope>NUCLEOTIDE SEQUENCE [LARGE SCALE GENOMIC DNA]</scope>
    <source>
        <strain>ND90Pr / ATCC 201652</strain>
    </source>
</reference>
<reference key="3">
    <citation type="journal article" date="2015" name="Fungal Biol.">
        <title>The regulatory gene VosA affects conidiogenesis and is involved in virulence of the fungal cereal pathogen Cochliobolus sativus.</title>
        <authorList>
            <person name="Wang R."/>
            <person name="Leng Y."/>
            <person name="Zhong S."/>
        </authorList>
    </citation>
    <scope>FUNCTION</scope>
    <scope>DISRUPTION PHENOTYPE</scope>
    <scope>INDUCTION</scope>
</reference>
<evidence type="ECO:0000250" key="1">
    <source>
        <dbReference type="UniProtKB" id="Q5BBX1"/>
    </source>
</evidence>
<evidence type="ECO:0000255" key="2">
    <source>
        <dbReference type="PROSITE-ProRule" id="PRU01165"/>
    </source>
</evidence>
<evidence type="ECO:0000256" key="3">
    <source>
        <dbReference type="SAM" id="MobiDB-lite"/>
    </source>
</evidence>
<evidence type="ECO:0000269" key="4">
    <source>
    </source>
</evidence>
<evidence type="ECO:0000303" key="5">
    <source>
    </source>
</evidence>
<evidence type="ECO:0000305" key="6"/>
<evidence type="ECO:0000305" key="7">
    <source>
    </source>
</evidence>
<sequence>MAFSYNYSLQASYPSQRAYVPYQQTQVPTPSPIYSLPITNTTTSGALSPSSCFLSVRQQPKEALVTVKGKEKFRKPLDPPPMLELKVSSDIDPSQQFLQNPYLFVSVSLYKHDKDEPIEGTPFDVLAGTLVSSLHRLKDVNNKDGAFFIFGDISIKVQGTYRLRFTLYELQPSYFTLSDLEQHKDLERYQGAALDPPEYGTYQCLGHVLSDKFNVVLPKDFKGLEESTYLSRAFSDQGVRLRLRKEARGMMSNKRSISGSGDLTSDQSQQQQQQQPLAKKRREDSVESANPSSLMSGFYQNVSPFVNTPYLQSQGLQGQTLQNQGLQAPVRHDTSYAWNLAYDPSFMG</sequence>